<reference key="1">
    <citation type="journal article" date="2004" name="Nucleic Acids Res.">
        <title>The genome sequence of Bacillus cereus ATCC 10987 reveals metabolic adaptations and a large plasmid related to Bacillus anthracis pXO1.</title>
        <authorList>
            <person name="Rasko D.A."/>
            <person name="Ravel J."/>
            <person name="Oekstad O.A."/>
            <person name="Helgason E."/>
            <person name="Cer R.Z."/>
            <person name="Jiang L."/>
            <person name="Shores K.A."/>
            <person name="Fouts D.E."/>
            <person name="Tourasse N.J."/>
            <person name="Angiuoli S.V."/>
            <person name="Kolonay J.F."/>
            <person name="Nelson W.C."/>
            <person name="Kolstoe A.-B."/>
            <person name="Fraser C.M."/>
            <person name="Read T.D."/>
        </authorList>
    </citation>
    <scope>NUCLEOTIDE SEQUENCE [LARGE SCALE GENOMIC DNA]</scope>
    <source>
        <strain>ATCC 10987 / NRS 248</strain>
    </source>
</reference>
<protein>
    <recommendedName>
        <fullName evidence="1">Probable inorganic carbon transporter subunit DabA</fullName>
    </recommendedName>
</protein>
<gene>
    <name evidence="1" type="primary">dabA</name>
    <name type="ordered locus">BCE_3190</name>
</gene>
<comment type="function">
    <text evidence="1">Part of an energy-coupled inorganic carbon pump.</text>
</comment>
<comment type="cofactor">
    <cofactor evidence="1">
        <name>Zn(2+)</name>
        <dbReference type="ChEBI" id="CHEBI:29105"/>
    </cofactor>
</comment>
<comment type="subunit">
    <text evidence="1">Forms a complex with DabB.</text>
</comment>
<comment type="subcellular location">
    <subcellularLocation>
        <location evidence="1">Cell membrane</location>
        <topology evidence="1">Peripheral membrane protein</topology>
    </subcellularLocation>
</comment>
<comment type="similarity">
    <text evidence="1">Belongs to the inorganic carbon transporter (TC 9.A.2) DabA family.</text>
</comment>
<name>DABA_BACC1</name>
<keyword id="KW-1003">Cell membrane</keyword>
<keyword id="KW-0472">Membrane</keyword>
<keyword id="KW-0479">Metal-binding</keyword>
<keyword id="KW-0813">Transport</keyword>
<keyword id="KW-0862">Zinc</keyword>
<sequence>MGISSIVTKETLKKKETNIEVQENNMNDLVKSASRVIAPLWPIATFAAHHPWMGLEKQSFEQVADWLKEIRNVDIYPSASMIHSAKAKGEIEELFLQSGLSRWLDSQSFHIPREKAERFCQEALKLERLPSSLLSSPELNKLAEEISYINTGGMKDSSLQLISSLIEDQKGENLSDILNYHIIKWCKLYLDDSGASWTMPNREKGLYRAWHHLITFDPALSKNERKVLKDWPQDAQGALTKALSELGISESNKQAYLEGHLLALPGWAGMIRWRSQQSIQEQELMIEYLAVRISMELAIVKPYLPIKNQKIEKKVEVVPLIASWIYWGDISIEEWLQMSATEQSELLAFAYRFDENIRKKLWLEAWEQTHAEQLREKIASKQRATNDKKHVLAQLAFCIDVRSEPFRRHLEKLGPFETFGIAGFFGLPIATSELGSNDSYPSLPVILKPKHQIKELADEKEFKNYKQRKKIDSSVSYTFKTMKQNVLTSMLLPEVSGPLLGLQMVTRSFVPRRVGSFIRNLRKTMLQKPDTTFSLNHVHDTKCEIPIGFTKEEKVNYVRQTLKMVGLTEKFAPLVVMCGHSSQSTNNPYAAALECGACGGAAGGFNARVFATLCNLPEVREALSAEGIKIPEDTIFVAAEHKTTVDELEWIYVPKLSEAAQEAFDRIESVMPNVSQHANRERLTQLPNFKTKIKNPSKEAHRFAEDWSEIRPEWGLARNASFIIGQRELTQDCDLEGRAFLHNYDWKQDESGDILASIIAGPGTVAQWINLQYYASTVAPHYYGSGNKTTQTVTSGLGVMQGNASDLLSGLPWQSVMQSDNETYHSPLRLLIVIQAPTKYIERLLKNDFTFREKVKNGWVRLASVDPEGQWKNW</sequence>
<accession>Q735G2</accession>
<proteinExistence type="inferred from homology"/>
<evidence type="ECO:0000255" key="1">
    <source>
        <dbReference type="HAMAP-Rule" id="MF_01871"/>
    </source>
</evidence>
<feature type="chain" id="PRO_0000387240" description="Probable inorganic carbon transporter subunit DabA">
    <location>
        <begin position="1"/>
        <end position="874"/>
    </location>
</feature>
<feature type="binding site" evidence="1">
    <location>
        <position position="398"/>
    </location>
    <ligand>
        <name>Zn(2+)</name>
        <dbReference type="ChEBI" id="CHEBI:29105"/>
    </ligand>
</feature>
<feature type="binding site" evidence="1">
    <location>
        <position position="400"/>
    </location>
    <ligand>
        <name>Zn(2+)</name>
        <dbReference type="ChEBI" id="CHEBI:29105"/>
    </ligand>
</feature>
<feature type="binding site" evidence="1">
    <location>
        <position position="580"/>
    </location>
    <ligand>
        <name>Zn(2+)</name>
        <dbReference type="ChEBI" id="CHEBI:29105"/>
    </ligand>
</feature>
<feature type="binding site" evidence="1">
    <location>
        <position position="595"/>
    </location>
    <ligand>
        <name>Zn(2+)</name>
        <dbReference type="ChEBI" id="CHEBI:29105"/>
    </ligand>
</feature>
<organism>
    <name type="scientific">Bacillus cereus (strain ATCC 10987 / NRS 248)</name>
    <dbReference type="NCBI Taxonomy" id="222523"/>
    <lineage>
        <taxon>Bacteria</taxon>
        <taxon>Bacillati</taxon>
        <taxon>Bacillota</taxon>
        <taxon>Bacilli</taxon>
        <taxon>Bacillales</taxon>
        <taxon>Bacillaceae</taxon>
        <taxon>Bacillus</taxon>
        <taxon>Bacillus cereus group</taxon>
    </lineage>
</organism>
<dbReference type="EMBL" id="AE017194">
    <property type="protein sequence ID" value="AAS42100.1"/>
    <property type="molecule type" value="Genomic_DNA"/>
</dbReference>
<dbReference type="SMR" id="Q735G2"/>
<dbReference type="KEGG" id="bca:BCE_3190"/>
<dbReference type="HOGENOM" id="CLU_009885_0_0_9"/>
<dbReference type="Proteomes" id="UP000002527">
    <property type="component" value="Chromosome"/>
</dbReference>
<dbReference type="GO" id="GO:0005886">
    <property type="term" value="C:plasma membrane"/>
    <property type="evidence" value="ECO:0007669"/>
    <property type="project" value="UniProtKB-SubCell"/>
</dbReference>
<dbReference type="GO" id="GO:0008270">
    <property type="term" value="F:zinc ion binding"/>
    <property type="evidence" value="ECO:0007669"/>
    <property type="project" value="UniProtKB-UniRule"/>
</dbReference>
<dbReference type="HAMAP" id="MF_01871">
    <property type="entry name" value="DabA"/>
    <property type="match status" value="1"/>
</dbReference>
<dbReference type="InterPro" id="IPR018752">
    <property type="entry name" value="DabA"/>
</dbReference>
<dbReference type="PANTHER" id="PTHR38344:SF1">
    <property type="entry name" value="INORGANIC CARBON TRANSPORTER SUBUNIT DABA-RELATED"/>
    <property type="match status" value="1"/>
</dbReference>
<dbReference type="PANTHER" id="PTHR38344">
    <property type="entry name" value="UPF0753 PROTEIN AQ_863"/>
    <property type="match status" value="1"/>
</dbReference>
<dbReference type="Pfam" id="PF10070">
    <property type="entry name" value="DabA"/>
    <property type="match status" value="1"/>
</dbReference>